<protein>
    <recommendedName>
        <fullName evidence="1">ATP-dependent helicase/nuclease subunit A</fullName>
        <ecNumber evidence="1">3.1.-.-</ecNumber>
        <ecNumber evidence="1">5.6.2.4</ecNumber>
    </recommendedName>
    <alternativeName>
        <fullName evidence="1">ATP-dependent helicase/nuclease AddA</fullName>
    </alternativeName>
    <alternativeName>
        <fullName evidence="1">DNA 3'-5' helicase AddA</fullName>
    </alternativeName>
</protein>
<proteinExistence type="inferred from homology"/>
<keyword id="KW-0067">ATP-binding</keyword>
<keyword id="KW-0227">DNA damage</keyword>
<keyword id="KW-0234">DNA repair</keyword>
<keyword id="KW-0238">DNA-binding</keyword>
<keyword id="KW-0269">Exonuclease</keyword>
<keyword id="KW-0347">Helicase</keyword>
<keyword id="KW-0378">Hydrolase</keyword>
<keyword id="KW-0413">Isomerase</keyword>
<keyword id="KW-0540">Nuclease</keyword>
<keyword id="KW-0547">Nucleotide-binding</keyword>
<keyword id="KW-1185">Reference proteome</keyword>
<feature type="chain" id="PRO_0000379235" description="ATP-dependent helicase/nuclease subunit A">
    <location>
        <begin position="1"/>
        <end position="1241"/>
    </location>
</feature>
<feature type="domain" description="UvrD-like helicase ATP-binding" evidence="1">
    <location>
        <begin position="12"/>
        <end position="485"/>
    </location>
</feature>
<feature type="domain" description="UvrD-like helicase C-terminal" evidence="1">
    <location>
        <begin position="505"/>
        <end position="805"/>
    </location>
</feature>
<feature type="binding site" evidence="1">
    <location>
        <begin position="33"/>
        <end position="40"/>
    </location>
    <ligand>
        <name>ATP</name>
        <dbReference type="ChEBI" id="CHEBI:30616"/>
    </ligand>
</feature>
<name>ADDA_BACCR</name>
<evidence type="ECO:0000255" key="1">
    <source>
        <dbReference type="HAMAP-Rule" id="MF_01451"/>
    </source>
</evidence>
<gene>
    <name evidence="1" type="primary">addA</name>
    <name type="ordered locus">BC_1138</name>
</gene>
<reference key="1">
    <citation type="journal article" date="2003" name="Nature">
        <title>Genome sequence of Bacillus cereus and comparative analysis with Bacillus anthracis.</title>
        <authorList>
            <person name="Ivanova N."/>
            <person name="Sorokin A."/>
            <person name="Anderson I."/>
            <person name="Galleron N."/>
            <person name="Candelon B."/>
            <person name="Kapatral V."/>
            <person name="Bhattacharyya A."/>
            <person name="Reznik G."/>
            <person name="Mikhailova N."/>
            <person name="Lapidus A."/>
            <person name="Chu L."/>
            <person name="Mazur M."/>
            <person name="Goltsman E."/>
            <person name="Larsen N."/>
            <person name="D'Souza M."/>
            <person name="Walunas T."/>
            <person name="Grechkin Y."/>
            <person name="Pusch G."/>
            <person name="Haselkorn R."/>
            <person name="Fonstein M."/>
            <person name="Ehrlich S.D."/>
            <person name="Overbeek R."/>
            <person name="Kyrpides N.C."/>
        </authorList>
    </citation>
    <scope>NUCLEOTIDE SEQUENCE [LARGE SCALE GENOMIC DNA]</scope>
    <source>
        <strain>ATCC 14579 / DSM 31 / CCUG 7414 / JCM 2152 / NBRC 15305 / NCIMB 9373 / NCTC 2599 / NRRL B-3711</strain>
    </source>
</reference>
<organism>
    <name type="scientific">Bacillus cereus (strain ATCC 14579 / DSM 31 / CCUG 7414 / JCM 2152 / NBRC 15305 / NCIMB 9373 / NCTC 2599 / NRRL B-3711)</name>
    <dbReference type="NCBI Taxonomy" id="226900"/>
    <lineage>
        <taxon>Bacteria</taxon>
        <taxon>Bacillati</taxon>
        <taxon>Bacillota</taxon>
        <taxon>Bacilli</taxon>
        <taxon>Bacillales</taxon>
        <taxon>Bacillaceae</taxon>
        <taxon>Bacillus</taxon>
        <taxon>Bacillus cereus group</taxon>
    </lineage>
</organism>
<comment type="function">
    <text evidence="1">The heterodimer acts as both an ATP-dependent DNA helicase and an ATP-dependent, dual-direction single-stranded exonuclease. Recognizes the chi site generating a DNA molecule suitable for the initiation of homologous recombination. The AddA nuclease domain is required for chi fragment generation; this subunit has the helicase and 3' -&gt; 5' nuclease activities.</text>
</comment>
<comment type="catalytic activity">
    <reaction evidence="1">
        <text>Couples ATP hydrolysis with the unwinding of duplex DNA by translocating in the 3'-5' direction.</text>
        <dbReference type="EC" id="5.6.2.4"/>
    </reaction>
</comment>
<comment type="catalytic activity">
    <reaction evidence="1">
        <text>ATP + H2O = ADP + phosphate + H(+)</text>
        <dbReference type="Rhea" id="RHEA:13065"/>
        <dbReference type="ChEBI" id="CHEBI:15377"/>
        <dbReference type="ChEBI" id="CHEBI:15378"/>
        <dbReference type="ChEBI" id="CHEBI:30616"/>
        <dbReference type="ChEBI" id="CHEBI:43474"/>
        <dbReference type="ChEBI" id="CHEBI:456216"/>
        <dbReference type="EC" id="5.6.2.4"/>
    </reaction>
</comment>
<comment type="cofactor">
    <cofactor evidence="1">
        <name>Mg(2+)</name>
        <dbReference type="ChEBI" id="CHEBI:18420"/>
    </cofactor>
</comment>
<comment type="subunit">
    <text evidence="1">Heterodimer of AddA and AddB/RexB.</text>
</comment>
<comment type="similarity">
    <text evidence="1">Belongs to the helicase family. AddA subfamily.</text>
</comment>
<dbReference type="EC" id="3.1.-.-" evidence="1"/>
<dbReference type="EC" id="5.6.2.4" evidence="1"/>
<dbReference type="EMBL" id="AE016877">
    <property type="protein sequence ID" value="AAP08125.1"/>
    <property type="molecule type" value="Genomic_DNA"/>
</dbReference>
<dbReference type="RefSeq" id="NP_830924.1">
    <property type="nucleotide sequence ID" value="NC_004722.1"/>
</dbReference>
<dbReference type="RefSeq" id="WP_000572298.1">
    <property type="nucleotide sequence ID" value="NZ_CP138336.1"/>
</dbReference>
<dbReference type="SMR" id="Q81GP9"/>
<dbReference type="STRING" id="226900.BC_1138"/>
<dbReference type="KEGG" id="bce:BC1138"/>
<dbReference type="PATRIC" id="fig|226900.8.peg.1101"/>
<dbReference type="HOGENOM" id="CLU_001114_3_1_9"/>
<dbReference type="OrthoDB" id="9810135at2"/>
<dbReference type="Proteomes" id="UP000001417">
    <property type="component" value="Chromosome"/>
</dbReference>
<dbReference type="GO" id="GO:0005829">
    <property type="term" value="C:cytosol"/>
    <property type="evidence" value="ECO:0000318"/>
    <property type="project" value="GO_Central"/>
</dbReference>
<dbReference type="GO" id="GO:0033202">
    <property type="term" value="C:DNA helicase complex"/>
    <property type="evidence" value="ECO:0000318"/>
    <property type="project" value="GO_Central"/>
</dbReference>
<dbReference type="GO" id="GO:0043138">
    <property type="term" value="F:3'-5' DNA helicase activity"/>
    <property type="evidence" value="ECO:0000318"/>
    <property type="project" value="GO_Central"/>
</dbReference>
<dbReference type="GO" id="GO:0008408">
    <property type="term" value="F:3'-5' exonuclease activity"/>
    <property type="evidence" value="ECO:0007669"/>
    <property type="project" value="UniProtKB-UniRule"/>
</dbReference>
<dbReference type="GO" id="GO:0005524">
    <property type="term" value="F:ATP binding"/>
    <property type="evidence" value="ECO:0007669"/>
    <property type="project" value="UniProtKB-UniRule"/>
</dbReference>
<dbReference type="GO" id="GO:0016887">
    <property type="term" value="F:ATP hydrolysis activity"/>
    <property type="evidence" value="ECO:0007669"/>
    <property type="project" value="RHEA"/>
</dbReference>
<dbReference type="GO" id="GO:0003690">
    <property type="term" value="F:double-stranded DNA binding"/>
    <property type="evidence" value="ECO:0007669"/>
    <property type="project" value="UniProtKB-UniRule"/>
</dbReference>
<dbReference type="GO" id="GO:0000724">
    <property type="term" value="P:double-strand break repair via homologous recombination"/>
    <property type="evidence" value="ECO:0007669"/>
    <property type="project" value="UniProtKB-UniRule"/>
</dbReference>
<dbReference type="GO" id="GO:0000725">
    <property type="term" value="P:recombinational repair"/>
    <property type="evidence" value="ECO:0000318"/>
    <property type="project" value="GO_Central"/>
</dbReference>
<dbReference type="CDD" id="cd18807">
    <property type="entry name" value="SF1_C_UvrD"/>
    <property type="match status" value="1"/>
</dbReference>
<dbReference type="FunFam" id="3.40.50.300:FF:001164">
    <property type="entry name" value="ATP-dependent helicase/nuclease subunit A"/>
    <property type="match status" value="1"/>
</dbReference>
<dbReference type="FunFam" id="3.40.50.300:FF:001187">
    <property type="entry name" value="ATP-dependent helicase/nuclease subunit A"/>
    <property type="match status" value="1"/>
</dbReference>
<dbReference type="FunFam" id="3.40.50.300:FF:001196">
    <property type="entry name" value="ATP-dependent helicase/nuclease subunit A"/>
    <property type="match status" value="1"/>
</dbReference>
<dbReference type="FunFam" id="3.40.50.300:FF:001236">
    <property type="entry name" value="ATP-dependent helicase/nuclease subunit A"/>
    <property type="match status" value="1"/>
</dbReference>
<dbReference type="FunFam" id="3.90.320.10:FF:000008">
    <property type="entry name" value="ATP-dependent helicase/nuclease subunit A"/>
    <property type="match status" value="1"/>
</dbReference>
<dbReference type="Gene3D" id="3.90.320.10">
    <property type="match status" value="1"/>
</dbReference>
<dbReference type="Gene3D" id="6.10.250.2380">
    <property type="match status" value="1"/>
</dbReference>
<dbReference type="Gene3D" id="3.40.50.300">
    <property type="entry name" value="P-loop containing nucleotide triphosphate hydrolases"/>
    <property type="match status" value="4"/>
</dbReference>
<dbReference type="HAMAP" id="MF_01451">
    <property type="entry name" value="AddA"/>
    <property type="match status" value="1"/>
</dbReference>
<dbReference type="InterPro" id="IPR014152">
    <property type="entry name" value="AddA"/>
</dbReference>
<dbReference type="InterPro" id="IPR014017">
    <property type="entry name" value="DNA_helicase_UvrD-like_C"/>
</dbReference>
<dbReference type="InterPro" id="IPR000212">
    <property type="entry name" value="DNA_helicase_UvrD/REP"/>
</dbReference>
<dbReference type="InterPro" id="IPR027417">
    <property type="entry name" value="P-loop_NTPase"/>
</dbReference>
<dbReference type="InterPro" id="IPR011604">
    <property type="entry name" value="PDDEXK-like_dom_sf"/>
</dbReference>
<dbReference type="InterPro" id="IPR038726">
    <property type="entry name" value="PDDEXK_AddAB-type"/>
</dbReference>
<dbReference type="InterPro" id="IPR011335">
    <property type="entry name" value="Restrct_endonuc-II-like"/>
</dbReference>
<dbReference type="InterPro" id="IPR014016">
    <property type="entry name" value="UvrD-like_ATP-bd"/>
</dbReference>
<dbReference type="NCBIfam" id="TIGR02785">
    <property type="entry name" value="addA_Gpos"/>
    <property type="match status" value="1"/>
</dbReference>
<dbReference type="PANTHER" id="PTHR11070:SF48">
    <property type="entry name" value="ATP-DEPENDENT HELICASE_NUCLEASE SUBUNIT A"/>
    <property type="match status" value="1"/>
</dbReference>
<dbReference type="PANTHER" id="PTHR11070">
    <property type="entry name" value="UVRD / RECB / PCRA DNA HELICASE FAMILY MEMBER"/>
    <property type="match status" value="1"/>
</dbReference>
<dbReference type="Pfam" id="PF12705">
    <property type="entry name" value="PDDEXK_1"/>
    <property type="match status" value="1"/>
</dbReference>
<dbReference type="Pfam" id="PF00580">
    <property type="entry name" value="UvrD-helicase"/>
    <property type="match status" value="1"/>
</dbReference>
<dbReference type="Pfam" id="PF13361">
    <property type="entry name" value="UvrD_C"/>
    <property type="match status" value="1"/>
</dbReference>
<dbReference type="SUPFAM" id="SSF52540">
    <property type="entry name" value="P-loop containing nucleoside triphosphate hydrolases"/>
    <property type="match status" value="1"/>
</dbReference>
<dbReference type="SUPFAM" id="SSF52980">
    <property type="entry name" value="Restriction endonuclease-like"/>
    <property type="match status" value="1"/>
</dbReference>
<dbReference type="PROSITE" id="PS51198">
    <property type="entry name" value="UVRD_HELICASE_ATP_BIND"/>
    <property type="match status" value="1"/>
</dbReference>
<dbReference type="PROSITE" id="PS51217">
    <property type="entry name" value="UVRD_HELICASE_CTER"/>
    <property type="match status" value="1"/>
</dbReference>
<sequence>MIENWPKKPEGSQWTDDQWKAVVANGRDILVAAAAGSGKTAVLVERIIKKIINEENPVDVDRLLVVTFTNAAAQEMKNRIGEALEKVLIDEPGSQHVRKQLSLLNKASISTIHSFCLQVIRGYYYMLDVDPRFRIANQTENELLKEEVLDDILEEEYGIEDNTIFFELVDRYTSDRSDDDLQRMILALHTESRAHPNPEKWLDKLVEAYDVEGKTIEDLVYASYLLEDVKFQLETAEQHIRKATELAMLPDGPAPRIETLQADVALLGTLSSAARESWTSVYEAMQNVSWQTLKRIKKSDYNEDVVKQVDSLRNKAKDEVKKLQEELFSRKPESFLRDFQDMHPVLEKLVQLVKVFTERFQAMKRDKGMVDFTDLEHFCLQILSEQSENGEMNPSAVALQYRNKFAEVLVDEYQDTNFVQESIIKFVTKDSESEGNLFMVGDVKQSIYRFRLAEPGLFLGKYKRFTQEGLGGGMKIDLAKNFRSRHEVLAGTNFIFKQIMGEEVGEIDYDADAELKLGATYPEGEDVAAELLCIQQTEEEVIDGEEGAEVEKAQLEARLMAQRIKAMVDSGYEVYDRKNDSMRPVQYRDFVILLRSMPWAPQIMEELKLQGIPVYADLATGYFEATEVNIMMNVFRVIDNPMQDIPLAAVLRSPIVGLSDEELATLRAHGKKGSFYEVMSSFLKGAPLEEEQELHDKLEWFYNLLQGWREFARQQSLSDLIWKVYGETGYYDFVGGLPAGKQRQANLRVLYDRARQYEATSFRGLFRFLRFIERILERGDDMGTARALGEQEDVVRIMTIHKSKGLEFPVVFVAGLGRRFNTQDLMKRFLLHKDFGFGSQFIDPRKRIKYTTLSQLAIKRKMKMELIAEEMRVLYVALTRAKEKLILIGTVKDANKEMEKWLDAREHSEWLLPDHIRAGASCYLDWIAPSLYRHRDSEMLLELGQGSIPDEIYGYDTSWKVEVVDGNTLLAPEPVQEEKQELLEALREKKAVPLQSERKEEVYDRLMWKYGYEDATSHRAKQSVTEIKRNYQSEEGSDNAFIKKLRAPIKTRPRFMEKKGLTYAERGTAVHAVMQHVDLKKPITVEVLQEQIAGMVNKELLTFEQAEEIAIEKVISFFDSDLGKRVLAAKSVEREVPFTMMLAAEEAYQDWQGKSEETILVQGVIDCMIEEEDGITLIDFKTDTIEGKFPGGFEQAKPILEDRYKVQLSLYAKALEKSLQHPVKEKCLYFFDGNHVVNIEE</sequence>
<accession>Q81GP9</accession>